<accession>Q8TW28</accession>
<dbReference type="EC" id="2.3.3.14" evidence="1"/>
<dbReference type="EC" id="2.3.3.-" evidence="1"/>
<dbReference type="EMBL" id="AE009439">
    <property type="protein sequence ID" value="AAM02422.1"/>
    <property type="molecule type" value="Genomic_DNA"/>
</dbReference>
<dbReference type="RefSeq" id="WP_011019577.1">
    <property type="nucleotide sequence ID" value="NC_003551.1"/>
</dbReference>
<dbReference type="SMR" id="Q8TW28"/>
<dbReference type="STRING" id="190192.MK1209"/>
<dbReference type="PaxDb" id="190192-MK1209"/>
<dbReference type="EnsemblBacteria" id="AAM02422">
    <property type="protein sequence ID" value="AAM02422"/>
    <property type="gene ID" value="MK1209"/>
</dbReference>
<dbReference type="GeneID" id="1477804"/>
<dbReference type="KEGG" id="mka:MK1209"/>
<dbReference type="PATRIC" id="fig|190192.8.peg.1311"/>
<dbReference type="HOGENOM" id="CLU_022158_4_2_2"/>
<dbReference type="InParanoid" id="Q8TW28"/>
<dbReference type="OrthoDB" id="6555at2157"/>
<dbReference type="UniPathway" id="UPA00919"/>
<dbReference type="Proteomes" id="UP000001826">
    <property type="component" value="Chromosome"/>
</dbReference>
<dbReference type="GO" id="GO:0004410">
    <property type="term" value="F:homocitrate synthase activity"/>
    <property type="evidence" value="ECO:0007669"/>
    <property type="project" value="UniProtKB-EC"/>
</dbReference>
<dbReference type="GO" id="GO:0009058">
    <property type="term" value="P:biosynthetic process"/>
    <property type="evidence" value="ECO:0007669"/>
    <property type="project" value="UniProtKB-ARBA"/>
</dbReference>
<dbReference type="GO" id="GO:0019752">
    <property type="term" value="P:carboxylic acid metabolic process"/>
    <property type="evidence" value="ECO:0007669"/>
    <property type="project" value="InterPro"/>
</dbReference>
<dbReference type="CDD" id="cd07940">
    <property type="entry name" value="DRE_TIM_IPMS"/>
    <property type="match status" value="1"/>
</dbReference>
<dbReference type="FunFam" id="1.10.238.260:FF:000001">
    <property type="entry name" value="2-isopropylmalate synthase"/>
    <property type="match status" value="1"/>
</dbReference>
<dbReference type="FunFam" id="3.20.20.70:FF:000010">
    <property type="entry name" value="2-isopropylmalate synthase"/>
    <property type="match status" value="1"/>
</dbReference>
<dbReference type="Gene3D" id="1.10.238.260">
    <property type="match status" value="1"/>
</dbReference>
<dbReference type="Gene3D" id="3.20.20.70">
    <property type="entry name" value="Aldolase class I"/>
    <property type="match status" value="1"/>
</dbReference>
<dbReference type="InterPro" id="IPR002034">
    <property type="entry name" value="AIPM/Hcit_synth_CS"/>
</dbReference>
<dbReference type="InterPro" id="IPR013785">
    <property type="entry name" value="Aldolase_TIM"/>
</dbReference>
<dbReference type="InterPro" id="IPR011830">
    <property type="entry name" value="LEU1_arch"/>
</dbReference>
<dbReference type="InterPro" id="IPR054691">
    <property type="entry name" value="LeuA/HCS_post-cat"/>
</dbReference>
<dbReference type="InterPro" id="IPR000891">
    <property type="entry name" value="PYR_CT"/>
</dbReference>
<dbReference type="NCBIfam" id="TIGR02090">
    <property type="entry name" value="LEU1_arch"/>
    <property type="match status" value="1"/>
</dbReference>
<dbReference type="NCBIfam" id="NF002085">
    <property type="entry name" value="PRK00915.1-2"/>
    <property type="match status" value="1"/>
</dbReference>
<dbReference type="PANTHER" id="PTHR42880">
    <property type="entry name" value="HOMOCITRATE SYNTHASE"/>
    <property type="match status" value="1"/>
</dbReference>
<dbReference type="PANTHER" id="PTHR42880:SF1">
    <property type="entry name" value="ISOPROPYLMALATE_HOMOCITRATE_CITRAMALATE SYNTHASE FAMILY PROTEIN"/>
    <property type="match status" value="1"/>
</dbReference>
<dbReference type="Pfam" id="PF22617">
    <property type="entry name" value="HCS_D2"/>
    <property type="match status" value="1"/>
</dbReference>
<dbReference type="Pfam" id="PF00682">
    <property type="entry name" value="HMGL-like"/>
    <property type="match status" value="1"/>
</dbReference>
<dbReference type="SUPFAM" id="SSF51569">
    <property type="entry name" value="Aldolase"/>
    <property type="match status" value="1"/>
</dbReference>
<dbReference type="PROSITE" id="PS00815">
    <property type="entry name" value="AIPM_HOMOCIT_SYNTH_1"/>
    <property type="match status" value="1"/>
</dbReference>
<dbReference type="PROSITE" id="PS00816">
    <property type="entry name" value="AIPM_HOMOCIT_SYNTH_2"/>
    <property type="match status" value="1"/>
</dbReference>
<dbReference type="PROSITE" id="PS50991">
    <property type="entry name" value="PYR_CT"/>
    <property type="match status" value="1"/>
</dbReference>
<evidence type="ECO:0000250" key="1">
    <source>
        <dbReference type="UniProtKB" id="Q57926"/>
    </source>
</evidence>
<evidence type="ECO:0000255" key="2">
    <source>
        <dbReference type="PROSITE-ProRule" id="PRU01151"/>
    </source>
</evidence>
<evidence type="ECO:0000305" key="3"/>
<comment type="function">
    <text evidence="1">Catalyzes the condensation of alpha-ketoglutarate and acetyl-CoA to form (R)-homocitrate. Can also catalyze the condensation of alpha-ketoadipate with acetyl-CoA to form (R)-homo(2)citrate, and the condensation of alpha-ketopimelate with acetyl-CoA to form (R)-homo(3)citrate. These reactions are part of the biosynthesis pathway of coenzyme B and biotin.</text>
</comment>
<comment type="catalytic activity">
    <reaction evidence="1">
        <text>acetyl-CoA + 2-oxoglutarate + H2O = (2R)-homocitrate + CoA + H(+)</text>
        <dbReference type="Rhea" id="RHEA:12929"/>
        <dbReference type="ChEBI" id="CHEBI:15377"/>
        <dbReference type="ChEBI" id="CHEBI:15378"/>
        <dbReference type="ChEBI" id="CHEBI:16810"/>
        <dbReference type="ChEBI" id="CHEBI:57287"/>
        <dbReference type="ChEBI" id="CHEBI:57288"/>
        <dbReference type="ChEBI" id="CHEBI:58884"/>
        <dbReference type="EC" id="2.3.3.14"/>
    </reaction>
    <physiologicalReaction direction="left-to-right" evidence="1">
        <dbReference type="Rhea" id="RHEA:12930"/>
    </physiologicalReaction>
</comment>
<comment type="catalytic activity">
    <reaction evidence="1">
        <text>2-oxoadipate + acetyl-CoA + H2O = (R)-dihomocitrate + CoA + H(+)</text>
        <dbReference type="Rhea" id="RHEA:44924"/>
        <dbReference type="ChEBI" id="CHEBI:15377"/>
        <dbReference type="ChEBI" id="CHEBI:15378"/>
        <dbReference type="ChEBI" id="CHEBI:57287"/>
        <dbReference type="ChEBI" id="CHEBI:57288"/>
        <dbReference type="ChEBI" id="CHEBI:57499"/>
        <dbReference type="ChEBI" id="CHEBI:72697"/>
    </reaction>
    <physiologicalReaction direction="left-to-right" evidence="1">
        <dbReference type="Rhea" id="RHEA:44925"/>
    </physiologicalReaction>
</comment>
<comment type="catalytic activity">
    <reaction evidence="1">
        <text>2-oxoheptanedioate + acetyl-CoA + H2O = (R)-trihomocitrate + CoA + H(+)</text>
        <dbReference type="Rhea" id="RHEA:44928"/>
        <dbReference type="ChEBI" id="CHEBI:15377"/>
        <dbReference type="ChEBI" id="CHEBI:15378"/>
        <dbReference type="ChEBI" id="CHEBI:57287"/>
        <dbReference type="ChEBI" id="CHEBI:57288"/>
        <dbReference type="ChEBI" id="CHEBI:72699"/>
        <dbReference type="ChEBI" id="CHEBI:72701"/>
    </reaction>
    <physiologicalReaction direction="left-to-right" evidence="1">
        <dbReference type="Rhea" id="RHEA:44929"/>
    </physiologicalReaction>
</comment>
<comment type="pathway">
    <text evidence="1">Organic acid metabolism; 2-oxosuberate biosynthesis.</text>
</comment>
<comment type="similarity">
    <text evidence="3">Belongs to the alpha-IPM synthase/homocitrate synthase family.</text>
</comment>
<sequence>MQSPYVREAVREMDLPDEVIVYDTTLRDGEQTPGVSFTPEQKLEIAHLLDELGVQQIEAGFPVVSEGERDAVRRIAHEGLNADILCLARTLRGDVDAALDCDVDGVITFIATSELHLKHKLRMSREEVLERIADTVEYAKDHGLWVAFSAEDGTRTEFEFLERVYRTAEECGADRVHATDTVGVMIPAAMRLFVAKIREVVDLPIGVHCHDDFGMAVANSLAAVEAGAQAISTTVNGIGERAGNAALEEVIMALKELYGIDPGFNTEVLAELSRKVSEYSGIDVPPNKAVVGENAFRHESGIHVAAVLEEPRTYEPIDPKEVGMNRKIVLGKHTGRKAVVAKLEELGVEPEEEIVEEVLKRIKALGDRRVRVTDSKLEEIVRNVLESRGDRDDPGSR</sequence>
<keyword id="KW-1185">Reference proteome</keyword>
<keyword id="KW-0808">Transferase</keyword>
<protein>
    <recommendedName>
        <fullName>Homocitrate synthase AksA</fullName>
        <ecNumber evidence="1">2.3.3.14</ecNumber>
    </recommendedName>
    <alternativeName>
        <fullName>(R)-homo(2)citrate synthase</fullName>
        <ecNumber evidence="1">2.3.3.-</ecNumber>
    </alternativeName>
    <alternativeName>
        <fullName>(R)-homo(3)citrate synthase</fullName>
        <ecNumber evidence="1">2.3.3.-</ecNumber>
    </alternativeName>
</protein>
<proteinExistence type="inferred from homology"/>
<organism>
    <name type="scientific">Methanopyrus kandleri (strain AV19 / DSM 6324 / JCM 9639 / NBRC 100938)</name>
    <dbReference type="NCBI Taxonomy" id="190192"/>
    <lineage>
        <taxon>Archaea</taxon>
        <taxon>Methanobacteriati</taxon>
        <taxon>Methanobacteriota</taxon>
        <taxon>Methanomada group</taxon>
        <taxon>Methanopyri</taxon>
        <taxon>Methanopyrales</taxon>
        <taxon>Methanopyraceae</taxon>
        <taxon>Methanopyrus</taxon>
    </lineage>
</organism>
<feature type="chain" id="PRO_0000140412" description="Homocitrate synthase AksA">
    <location>
        <begin position="1"/>
        <end position="397"/>
    </location>
</feature>
<feature type="domain" description="Pyruvate carboxyltransferase" evidence="2">
    <location>
        <begin position="19"/>
        <end position="270"/>
    </location>
</feature>
<reference key="1">
    <citation type="journal article" date="2002" name="Proc. Natl. Acad. Sci. U.S.A.">
        <title>The complete genome of hyperthermophile Methanopyrus kandleri AV19 and monophyly of archaeal methanogens.</title>
        <authorList>
            <person name="Slesarev A.I."/>
            <person name="Mezhevaya K.V."/>
            <person name="Makarova K.S."/>
            <person name="Polushin N.N."/>
            <person name="Shcherbinina O.V."/>
            <person name="Shakhova V.V."/>
            <person name="Belova G.I."/>
            <person name="Aravind L."/>
            <person name="Natale D.A."/>
            <person name="Rogozin I.B."/>
            <person name="Tatusov R.L."/>
            <person name="Wolf Y.I."/>
            <person name="Stetter K.O."/>
            <person name="Malykh A.G."/>
            <person name="Koonin E.V."/>
            <person name="Kozyavkin S.A."/>
        </authorList>
    </citation>
    <scope>NUCLEOTIDE SEQUENCE [LARGE SCALE GENOMIC DNA]</scope>
    <source>
        <strain>AV19 / DSM 6324 / JCM 9639 / NBRC 100938</strain>
    </source>
</reference>
<gene>
    <name type="primary">aksA</name>
    <name type="ordered locus">MK1209</name>
</gene>
<name>AKSA_METKA</name>